<proteinExistence type="inferred from homology"/>
<reference key="1">
    <citation type="submission" date="2007-04" db="EMBL/GenBank/DDBJ databases">
        <title>Complete sequence of chromosome of Mycobacterium gilvum PYR-GCK.</title>
        <authorList>
            <consortium name="US DOE Joint Genome Institute"/>
            <person name="Copeland A."/>
            <person name="Lucas S."/>
            <person name="Lapidus A."/>
            <person name="Barry K."/>
            <person name="Detter J.C."/>
            <person name="Glavina del Rio T."/>
            <person name="Hammon N."/>
            <person name="Israni S."/>
            <person name="Dalin E."/>
            <person name="Tice H."/>
            <person name="Pitluck S."/>
            <person name="Chain P."/>
            <person name="Malfatti S."/>
            <person name="Shin M."/>
            <person name="Vergez L."/>
            <person name="Schmutz J."/>
            <person name="Larimer F."/>
            <person name="Land M."/>
            <person name="Hauser L."/>
            <person name="Kyrpides N."/>
            <person name="Mikhailova N."/>
            <person name="Miller C."/>
            <person name="Richardson P."/>
        </authorList>
    </citation>
    <scope>NUCLEOTIDE SEQUENCE [LARGE SCALE GENOMIC DNA]</scope>
    <source>
        <strain>PYR-GCK</strain>
    </source>
</reference>
<name>RS2_MYCGI</name>
<keyword id="KW-0687">Ribonucleoprotein</keyword>
<keyword id="KW-0689">Ribosomal protein</keyword>
<comment type="similarity">
    <text evidence="1">Belongs to the universal ribosomal protein uS2 family.</text>
</comment>
<protein>
    <recommendedName>
        <fullName evidence="1">Small ribosomal subunit protein uS2</fullName>
    </recommendedName>
    <alternativeName>
        <fullName evidence="3">30S ribosomal protein S2</fullName>
    </alternativeName>
</protein>
<gene>
    <name evidence="1" type="primary">rpsB</name>
    <name type="ordered locus">Mflv_4133</name>
</gene>
<organism>
    <name type="scientific">Mycolicibacterium gilvum (strain PYR-GCK)</name>
    <name type="common">Mycobacterium gilvum (strain PYR-GCK)</name>
    <dbReference type="NCBI Taxonomy" id="350054"/>
    <lineage>
        <taxon>Bacteria</taxon>
        <taxon>Bacillati</taxon>
        <taxon>Actinomycetota</taxon>
        <taxon>Actinomycetes</taxon>
        <taxon>Mycobacteriales</taxon>
        <taxon>Mycobacteriaceae</taxon>
        <taxon>Mycolicibacterium</taxon>
    </lineage>
</organism>
<sequence>MAVVTMKQLLDSGAHFGHQTRRWNPKMKRFIFTDRNGIYIIDLQQTLTYIDSAYEFVKETVAHGGSIMFVGTKKQAQESIAQEATRVGMPYVNQRWLGGMLTNFQTVHKRLQRMKELEAMEQTGGFEGRTKKEILMLTREKNKLERSLGGIRDMAKVPSAIWVVDTNKEHLAVAEARKLNIPIIAILDTNCDPDVVDYPIPGNDDAIRSAALLTKVIASAVAEGLQARAGAGADKAEAGQDGAAAEPLAEWEQELLAGATTAAPEAAAGEAAAAPEQSS</sequence>
<dbReference type="EMBL" id="CP000656">
    <property type="protein sequence ID" value="ABP46603.1"/>
    <property type="molecule type" value="Genomic_DNA"/>
</dbReference>
<dbReference type="SMR" id="A4TC67"/>
<dbReference type="STRING" id="350054.Mflv_4133"/>
<dbReference type="KEGG" id="mgi:Mflv_4133"/>
<dbReference type="eggNOG" id="COG0052">
    <property type="taxonomic scope" value="Bacteria"/>
</dbReference>
<dbReference type="HOGENOM" id="CLU_040318_2_3_11"/>
<dbReference type="OrthoDB" id="9808036at2"/>
<dbReference type="GO" id="GO:0022627">
    <property type="term" value="C:cytosolic small ribosomal subunit"/>
    <property type="evidence" value="ECO:0007669"/>
    <property type="project" value="TreeGrafter"/>
</dbReference>
<dbReference type="GO" id="GO:0003735">
    <property type="term" value="F:structural constituent of ribosome"/>
    <property type="evidence" value="ECO:0007669"/>
    <property type="project" value="InterPro"/>
</dbReference>
<dbReference type="GO" id="GO:0006412">
    <property type="term" value="P:translation"/>
    <property type="evidence" value="ECO:0007669"/>
    <property type="project" value="UniProtKB-UniRule"/>
</dbReference>
<dbReference type="CDD" id="cd01425">
    <property type="entry name" value="RPS2"/>
    <property type="match status" value="1"/>
</dbReference>
<dbReference type="FunFam" id="1.10.287.610:FF:000001">
    <property type="entry name" value="30S ribosomal protein S2"/>
    <property type="match status" value="1"/>
</dbReference>
<dbReference type="Gene3D" id="3.40.50.10490">
    <property type="entry name" value="Glucose-6-phosphate isomerase like protein, domain 1"/>
    <property type="match status" value="1"/>
</dbReference>
<dbReference type="Gene3D" id="1.10.287.610">
    <property type="entry name" value="Helix hairpin bin"/>
    <property type="match status" value="1"/>
</dbReference>
<dbReference type="HAMAP" id="MF_00291_B">
    <property type="entry name" value="Ribosomal_uS2_B"/>
    <property type="match status" value="1"/>
</dbReference>
<dbReference type="InterPro" id="IPR001865">
    <property type="entry name" value="Ribosomal_uS2"/>
</dbReference>
<dbReference type="InterPro" id="IPR005706">
    <property type="entry name" value="Ribosomal_uS2_bac/mit/plastid"/>
</dbReference>
<dbReference type="InterPro" id="IPR018130">
    <property type="entry name" value="Ribosomal_uS2_CS"/>
</dbReference>
<dbReference type="InterPro" id="IPR023591">
    <property type="entry name" value="Ribosomal_uS2_flav_dom_sf"/>
</dbReference>
<dbReference type="NCBIfam" id="TIGR01011">
    <property type="entry name" value="rpsB_bact"/>
    <property type="match status" value="1"/>
</dbReference>
<dbReference type="PANTHER" id="PTHR12534">
    <property type="entry name" value="30S RIBOSOMAL PROTEIN S2 PROKARYOTIC AND ORGANELLAR"/>
    <property type="match status" value="1"/>
</dbReference>
<dbReference type="PANTHER" id="PTHR12534:SF0">
    <property type="entry name" value="SMALL RIBOSOMAL SUBUNIT PROTEIN US2M"/>
    <property type="match status" value="1"/>
</dbReference>
<dbReference type="Pfam" id="PF00318">
    <property type="entry name" value="Ribosomal_S2"/>
    <property type="match status" value="1"/>
</dbReference>
<dbReference type="PRINTS" id="PR00395">
    <property type="entry name" value="RIBOSOMALS2"/>
</dbReference>
<dbReference type="SUPFAM" id="SSF52313">
    <property type="entry name" value="Ribosomal protein S2"/>
    <property type="match status" value="1"/>
</dbReference>
<dbReference type="PROSITE" id="PS00962">
    <property type="entry name" value="RIBOSOMAL_S2_1"/>
    <property type="match status" value="1"/>
</dbReference>
<accession>A4TC67</accession>
<feature type="chain" id="PRO_1000078887" description="Small ribosomal subunit protein uS2">
    <location>
        <begin position="1"/>
        <end position="279"/>
    </location>
</feature>
<feature type="region of interest" description="Disordered" evidence="2">
    <location>
        <begin position="255"/>
        <end position="279"/>
    </location>
</feature>
<evidence type="ECO:0000255" key="1">
    <source>
        <dbReference type="HAMAP-Rule" id="MF_00291"/>
    </source>
</evidence>
<evidence type="ECO:0000256" key="2">
    <source>
        <dbReference type="SAM" id="MobiDB-lite"/>
    </source>
</evidence>
<evidence type="ECO:0000305" key="3"/>